<comment type="function">
    <text evidence="1">Modulates transcription in response to changes in cellular NADH/NAD(+) redox state.</text>
</comment>
<comment type="subunit">
    <text evidence="1">Homodimer.</text>
</comment>
<comment type="subcellular location">
    <subcellularLocation>
        <location evidence="1">Cytoplasm</location>
    </subcellularLocation>
</comment>
<comment type="similarity">
    <text evidence="1">Belongs to the transcriptional regulatory Rex family.</text>
</comment>
<sequence length="212" mass="23778">MAHNKSKIPRATLKRLPLYYRFVNTLKSKGIDRVNSKAISEALNIESATIRRDFSYFGELGKKGYGYNIDSLLEFFKTALSDSDNIHIALVGVGNLGRALLTYNFSIHDEMTITEAFDIDEQIVGTEIGDVSVHHMNDLKKVLNAQNINVVILTTPEEAAQRVANQLVEADIQGILNFTPARIEVPNTVQVHHIDLGIELQSLLFFMKNYSN</sequence>
<feature type="chain" id="PRO_0000097911" description="Redox-sensing transcriptional repressor Rex">
    <location>
        <begin position="1"/>
        <end position="212"/>
    </location>
</feature>
<feature type="DNA-binding region" description="H-T-H motif" evidence="1">
    <location>
        <begin position="18"/>
        <end position="57"/>
    </location>
</feature>
<feature type="binding site" evidence="1">
    <location>
        <begin position="92"/>
        <end position="97"/>
    </location>
    <ligand>
        <name>NAD(+)</name>
        <dbReference type="ChEBI" id="CHEBI:57540"/>
    </ligand>
</feature>
<evidence type="ECO:0000255" key="1">
    <source>
        <dbReference type="HAMAP-Rule" id="MF_01131"/>
    </source>
</evidence>
<keyword id="KW-0963">Cytoplasm</keyword>
<keyword id="KW-0238">DNA-binding</keyword>
<keyword id="KW-0520">NAD</keyword>
<keyword id="KW-0678">Repressor</keyword>
<keyword id="KW-0804">Transcription</keyword>
<keyword id="KW-0805">Transcription regulation</keyword>
<organism>
    <name type="scientific">Staphylococcus haemolyticus (strain JCSC1435)</name>
    <dbReference type="NCBI Taxonomy" id="279808"/>
    <lineage>
        <taxon>Bacteria</taxon>
        <taxon>Bacillati</taxon>
        <taxon>Bacillota</taxon>
        <taxon>Bacilli</taxon>
        <taxon>Bacillales</taxon>
        <taxon>Staphylococcaceae</taxon>
        <taxon>Staphylococcus</taxon>
    </lineage>
</organism>
<gene>
    <name evidence="1" type="primary">rex</name>
    <name type="ordered locus">SH0986</name>
</gene>
<proteinExistence type="inferred from homology"/>
<name>REX_STAHJ</name>
<protein>
    <recommendedName>
        <fullName evidence="1">Redox-sensing transcriptional repressor Rex</fullName>
    </recommendedName>
</protein>
<dbReference type="EMBL" id="AP006716">
    <property type="protein sequence ID" value="BAE04295.1"/>
    <property type="molecule type" value="Genomic_DNA"/>
</dbReference>
<dbReference type="RefSeq" id="WP_011275294.1">
    <property type="nucleotide sequence ID" value="NC_007168.1"/>
</dbReference>
<dbReference type="SMR" id="Q4L7T0"/>
<dbReference type="KEGG" id="sha:SH0986"/>
<dbReference type="eggNOG" id="COG2344">
    <property type="taxonomic scope" value="Bacteria"/>
</dbReference>
<dbReference type="HOGENOM" id="CLU_061534_1_1_9"/>
<dbReference type="OrthoDB" id="9784760at2"/>
<dbReference type="Proteomes" id="UP000000543">
    <property type="component" value="Chromosome"/>
</dbReference>
<dbReference type="GO" id="GO:0005737">
    <property type="term" value="C:cytoplasm"/>
    <property type="evidence" value="ECO:0007669"/>
    <property type="project" value="UniProtKB-SubCell"/>
</dbReference>
<dbReference type="GO" id="GO:0003677">
    <property type="term" value="F:DNA binding"/>
    <property type="evidence" value="ECO:0007669"/>
    <property type="project" value="UniProtKB-UniRule"/>
</dbReference>
<dbReference type="GO" id="GO:0003700">
    <property type="term" value="F:DNA-binding transcription factor activity"/>
    <property type="evidence" value="ECO:0007669"/>
    <property type="project" value="UniProtKB-UniRule"/>
</dbReference>
<dbReference type="GO" id="GO:0045892">
    <property type="term" value="P:negative regulation of DNA-templated transcription"/>
    <property type="evidence" value="ECO:0007669"/>
    <property type="project" value="InterPro"/>
</dbReference>
<dbReference type="GO" id="GO:0051775">
    <property type="term" value="P:response to redox state"/>
    <property type="evidence" value="ECO:0007669"/>
    <property type="project" value="InterPro"/>
</dbReference>
<dbReference type="Gene3D" id="3.40.50.720">
    <property type="entry name" value="NAD(P)-binding Rossmann-like Domain"/>
    <property type="match status" value="1"/>
</dbReference>
<dbReference type="Gene3D" id="1.10.10.10">
    <property type="entry name" value="Winged helix-like DNA-binding domain superfamily/Winged helix DNA-binding domain"/>
    <property type="match status" value="1"/>
</dbReference>
<dbReference type="HAMAP" id="MF_01131">
    <property type="entry name" value="Rex"/>
    <property type="match status" value="1"/>
</dbReference>
<dbReference type="InterPro" id="IPR003781">
    <property type="entry name" value="CoA-bd"/>
</dbReference>
<dbReference type="InterPro" id="IPR036291">
    <property type="entry name" value="NAD(P)-bd_dom_sf"/>
</dbReference>
<dbReference type="InterPro" id="IPR009718">
    <property type="entry name" value="Rex_DNA-bd_C_dom"/>
</dbReference>
<dbReference type="InterPro" id="IPR022876">
    <property type="entry name" value="Tscrpt_rep_Rex"/>
</dbReference>
<dbReference type="InterPro" id="IPR036388">
    <property type="entry name" value="WH-like_DNA-bd_sf"/>
</dbReference>
<dbReference type="InterPro" id="IPR036390">
    <property type="entry name" value="WH_DNA-bd_sf"/>
</dbReference>
<dbReference type="NCBIfam" id="NF003989">
    <property type="entry name" value="PRK05472.1-3"/>
    <property type="match status" value="1"/>
</dbReference>
<dbReference type="NCBIfam" id="NF003991">
    <property type="entry name" value="PRK05472.1-5"/>
    <property type="match status" value="1"/>
</dbReference>
<dbReference type="NCBIfam" id="NF003994">
    <property type="entry name" value="PRK05472.2-3"/>
    <property type="match status" value="1"/>
</dbReference>
<dbReference type="NCBIfam" id="NF003995">
    <property type="entry name" value="PRK05472.2-4"/>
    <property type="match status" value="1"/>
</dbReference>
<dbReference type="NCBIfam" id="NF003996">
    <property type="entry name" value="PRK05472.2-5"/>
    <property type="match status" value="1"/>
</dbReference>
<dbReference type="PANTHER" id="PTHR35786">
    <property type="entry name" value="REDOX-SENSING TRANSCRIPTIONAL REPRESSOR REX"/>
    <property type="match status" value="1"/>
</dbReference>
<dbReference type="PANTHER" id="PTHR35786:SF1">
    <property type="entry name" value="REDOX-SENSING TRANSCRIPTIONAL REPRESSOR REX 1"/>
    <property type="match status" value="1"/>
</dbReference>
<dbReference type="Pfam" id="PF02629">
    <property type="entry name" value="CoA_binding"/>
    <property type="match status" value="1"/>
</dbReference>
<dbReference type="Pfam" id="PF06971">
    <property type="entry name" value="Put_DNA-bind_N"/>
    <property type="match status" value="1"/>
</dbReference>
<dbReference type="SMART" id="SM00881">
    <property type="entry name" value="CoA_binding"/>
    <property type="match status" value="1"/>
</dbReference>
<dbReference type="SUPFAM" id="SSF51735">
    <property type="entry name" value="NAD(P)-binding Rossmann-fold domains"/>
    <property type="match status" value="1"/>
</dbReference>
<dbReference type="SUPFAM" id="SSF46785">
    <property type="entry name" value="Winged helix' DNA-binding domain"/>
    <property type="match status" value="1"/>
</dbReference>
<reference key="1">
    <citation type="journal article" date="2005" name="J. Bacteriol.">
        <title>Whole-genome sequencing of Staphylococcus haemolyticus uncovers the extreme plasticity of its genome and the evolution of human-colonizing staphylococcal species.</title>
        <authorList>
            <person name="Takeuchi F."/>
            <person name="Watanabe S."/>
            <person name="Baba T."/>
            <person name="Yuzawa H."/>
            <person name="Ito T."/>
            <person name="Morimoto Y."/>
            <person name="Kuroda M."/>
            <person name="Cui L."/>
            <person name="Takahashi M."/>
            <person name="Ankai A."/>
            <person name="Baba S."/>
            <person name="Fukui S."/>
            <person name="Lee J.C."/>
            <person name="Hiramatsu K."/>
        </authorList>
    </citation>
    <scope>NUCLEOTIDE SEQUENCE [LARGE SCALE GENOMIC DNA]</scope>
    <source>
        <strain>JCSC1435</strain>
    </source>
</reference>
<accession>Q4L7T0</accession>